<name>RSRC2_XENTR</name>
<dbReference type="EMBL" id="BC084062">
    <property type="protein sequence ID" value="AAH84062.1"/>
    <property type="molecule type" value="mRNA"/>
</dbReference>
<dbReference type="RefSeq" id="NP_001011036.1">
    <property type="nucleotide sequence ID" value="NM_001011036.1"/>
</dbReference>
<dbReference type="FunCoup" id="Q5XHJ5">
    <property type="interactions" value="2556"/>
</dbReference>
<dbReference type="STRING" id="8364.ENSXETP00000020622"/>
<dbReference type="PaxDb" id="8364-ENSXETP00000054113"/>
<dbReference type="DNASU" id="496445"/>
<dbReference type="GeneID" id="496445"/>
<dbReference type="KEGG" id="xtr:496445"/>
<dbReference type="AGR" id="Xenbase:XB-GENE-977411"/>
<dbReference type="CTD" id="65117"/>
<dbReference type="Xenbase" id="XB-GENE-977411">
    <property type="gene designation" value="rsrc2"/>
</dbReference>
<dbReference type="eggNOG" id="ENOG502QQ3C">
    <property type="taxonomic scope" value="Eukaryota"/>
</dbReference>
<dbReference type="InParanoid" id="Q5XHJ5"/>
<dbReference type="OMA" id="QEEMFKN"/>
<dbReference type="OrthoDB" id="1928974at2759"/>
<dbReference type="Proteomes" id="UP000008143">
    <property type="component" value="Chromosome 1"/>
</dbReference>
<dbReference type="Bgee" id="ENSXETG00000007798">
    <property type="expression patterns" value="Expressed in brain and 16 other cell types or tissues"/>
</dbReference>
<dbReference type="InterPro" id="IPR028124">
    <property type="entry name" value="SMAP_dom"/>
</dbReference>
<dbReference type="PANTHER" id="PTHR22426">
    <property type="entry name" value="ARGININE_SERINE-RICH COILED-COIL PROTEIN 2"/>
    <property type="match status" value="1"/>
</dbReference>
<dbReference type="PANTHER" id="PTHR22426:SF2">
    <property type="entry name" value="ARGININE_SERINE-RICH COILED-COIL PROTEIN 2"/>
    <property type="match status" value="1"/>
</dbReference>
<dbReference type="Pfam" id="PF15477">
    <property type="entry name" value="SMAP"/>
    <property type="match status" value="1"/>
</dbReference>
<reference key="1">
    <citation type="submission" date="2004-10" db="EMBL/GenBank/DDBJ databases">
        <authorList>
            <consortium name="NIH - Xenopus Gene Collection (XGC) project"/>
        </authorList>
    </citation>
    <scope>NUCLEOTIDE SEQUENCE [LARGE SCALE MRNA]</scope>
    <source>
        <tissue>Embryo</tissue>
    </source>
</reference>
<accession>Q5XHJ5</accession>
<organism>
    <name type="scientific">Xenopus tropicalis</name>
    <name type="common">Western clawed frog</name>
    <name type="synonym">Silurana tropicalis</name>
    <dbReference type="NCBI Taxonomy" id="8364"/>
    <lineage>
        <taxon>Eukaryota</taxon>
        <taxon>Metazoa</taxon>
        <taxon>Chordata</taxon>
        <taxon>Craniata</taxon>
        <taxon>Vertebrata</taxon>
        <taxon>Euteleostomi</taxon>
        <taxon>Amphibia</taxon>
        <taxon>Batrachia</taxon>
        <taxon>Anura</taxon>
        <taxon>Pipoidea</taxon>
        <taxon>Pipidae</taxon>
        <taxon>Xenopodinae</taxon>
        <taxon>Xenopus</taxon>
        <taxon>Silurana</taxon>
    </lineage>
</organism>
<feature type="chain" id="PRO_0000314943" description="Arginine/serine-rich coiled-coil protein 2">
    <location>
        <begin position="1"/>
        <end position="409"/>
    </location>
</feature>
<feature type="region of interest" description="Disordered" evidence="2">
    <location>
        <begin position="1"/>
        <end position="204"/>
    </location>
</feature>
<feature type="coiled-coil region" evidence="1">
    <location>
        <begin position="204"/>
        <end position="244"/>
    </location>
</feature>
<feature type="compositionally biased region" description="Basic and acidic residues" evidence="2">
    <location>
        <begin position="1"/>
        <end position="31"/>
    </location>
</feature>
<feature type="compositionally biased region" description="Basic residues" evidence="2">
    <location>
        <begin position="34"/>
        <end position="50"/>
    </location>
</feature>
<feature type="compositionally biased region" description="Basic and acidic residues" evidence="2">
    <location>
        <begin position="64"/>
        <end position="108"/>
    </location>
</feature>
<feature type="compositionally biased region" description="Basic residues" evidence="2">
    <location>
        <begin position="109"/>
        <end position="191"/>
    </location>
</feature>
<protein>
    <recommendedName>
        <fullName>Arginine/serine-rich coiled-coil protein 2</fullName>
    </recommendedName>
</protein>
<sequence length="409" mass="47336">MASSDTERDGGSPEKHSPVTDKHLEHSDLAKSPRGLKHYSKSRSRSREHKRKTDECRKHRSRSRSKEARRHEVKEKSSKKHRPDDSIDRDHSDKVRERLNSSENGEERHRRKEKRSSRGRSYSKSRSRERRHRSRSHDRRKSRSRSKERKRRPRSRSRSRSKHRHRSKSRSRSREKKKRIEKPRRHSRSRSRTPPSPPAFRGRNTAMDAQEALARRLERAKKLQEQREKEMADKQKQQETVAVAAAGGGSVINVAALLASGTQVTPQIAMAAQMAALQAKALAETGISVPSYYNPAAVNPMRFAEQEKKRKMLWQGKKEGDKSQSAEIWEKLNFGNKDQNVKFRKLMGIKNEEEAATSSVDVESFKTLKQQEEVFRNLDAQYEMARSQTHTQRGMGLGFTSSMRGMDTV</sequence>
<comment type="similarity">
    <text evidence="3">Belongs to the RSRC2 family.</text>
</comment>
<keyword id="KW-0175">Coiled coil</keyword>
<keyword id="KW-1185">Reference proteome</keyword>
<evidence type="ECO:0000255" key="1"/>
<evidence type="ECO:0000256" key="2">
    <source>
        <dbReference type="SAM" id="MobiDB-lite"/>
    </source>
</evidence>
<evidence type="ECO:0000305" key="3"/>
<gene>
    <name type="primary">rsrc2</name>
</gene>
<proteinExistence type="evidence at transcript level"/>